<organism>
    <name type="scientific">Synechococcus elongatus (strain ATCC 33912 / PCC 7942 / FACHB-805)</name>
    <name type="common">Anacystis nidulans R2</name>
    <dbReference type="NCBI Taxonomy" id="1140"/>
    <lineage>
        <taxon>Bacteria</taxon>
        <taxon>Bacillati</taxon>
        <taxon>Cyanobacteriota</taxon>
        <taxon>Cyanophyceae</taxon>
        <taxon>Synechococcales</taxon>
        <taxon>Synechococcaceae</taxon>
        <taxon>Synechococcus</taxon>
    </lineage>
</organism>
<keyword id="KW-1185">Reference proteome</keyword>
<name>Y2318_SYNE7</name>
<gene>
    <name type="ordered locus">Synpcc7942_2318</name>
</gene>
<reference key="1">
    <citation type="journal article" date="1994" name="Proc. Natl. Acad. Sci. U.S.A.">
        <title>P-type ATPase from the cyanobacterium Synechococcus 7942 related to the human Menkes and Wilson disease gene products.</title>
        <authorList>
            <person name="Phung L.T."/>
            <person name="Ajlani G."/>
            <person name="Haselkorn R."/>
        </authorList>
    </citation>
    <scope>NUCLEOTIDE SEQUENCE [GENOMIC DNA]</scope>
</reference>
<reference key="2">
    <citation type="submission" date="2005-08" db="EMBL/GenBank/DDBJ databases">
        <title>Complete sequence of chromosome 1 of Synechococcus elongatus PCC 7942.</title>
        <authorList>
            <consortium name="US DOE Joint Genome Institute"/>
            <person name="Copeland A."/>
            <person name="Lucas S."/>
            <person name="Lapidus A."/>
            <person name="Barry K."/>
            <person name="Detter J.C."/>
            <person name="Glavina T."/>
            <person name="Hammon N."/>
            <person name="Israni S."/>
            <person name="Pitluck S."/>
            <person name="Schmutz J."/>
            <person name="Larimer F."/>
            <person name="Land M."/>
            <person name="Kyrpides N."/>
            <person name="Lykidis A."/>
            <person name="Golden S."/>
            <person name="Richardson P."/>
        </authorList>
    </citation>
    <scope>NUCLEOTIDE SEQUENCE [LARGE SCALE GENOMIC DNA]</scope>
    <source>
        <strain>ATCC 33912 / PCC 7942 / FACHB-805</strain>
    </source>
</reference>
<feature type="chain" id="PRO_0000066512" description="Uncharacterized protein Synpcc7942_2318">
    <location>
        <begin position="1"/>
        <end position="208"/>
    </location>
</feature>
<accession>P37372</accession>
<accession>Q31KS1</accession>
<proteinExistence type="predicted"/>
<dbReference type="EMBL" id="U04356">
    <property type="protein sequence ID" value="AAB82019.1"/>
    <property type="molecule type" value="Genomic_DNA"/>
</dbReference>
<dbReference type="EMBL" id="CP000100">
    <property type="protein sequence ID" value="ABB58348.1"/>
    <property type="molecule type" value="Genomic_DNA"/>
</dbReference>
<dbReference type="RefSeq" id="WP_011244094.1">
    <property type="nucleotide sequence ID" value="NZ_JACJTX010000001.1"/>
</dbReference>
<dbReference type="SMR" id="P37372"/>
<dbReference type="STRING" id="1140.Synpcc7942_2318"/>
<dbReference type="PaxDb" id="1140-Synpcc7942_2318"/>
<dbReference type="KEGG" id="syf:Synpcc7942_2318"/>
<dbReference type="eggNOG" id="COG3224">
    <property type="taxonomic scope" value="Bacteria"/>
</dbReference>
<dbReference type="HOGENOM" id="CLU_075307_1_1_3"/>
<dbReference type="OrthoDB" id="1494254at2"/>
<dbReference type="BioCyc" id="SYNEL:SYNPCC7942_2318-MONOMER"/>
<dbReference type="Proteomes" id="UP000889800">
    <property type="component" value="Chromosome"/>
</dbReference>
<dbReference type="Gene3D" id="3.30.70.100">
    <property type="match status" value="1"/>
</dbReference>
<dbReference type="InterPro" id="IPR038762">
    <property type="entry name" value="ABM_predict"/>
</dbReference>
<dbReference type="InterPro" id="IPR011008">
    <property type="entry name" value="Dimeric_a/b-barrel"/>
</dbReference>
<dbReference type="PANTHER" id="PTHR40057">
    <property type="entry name" value="SLR1162 PROTEIN"/>
    <property type="match status" value="1"/>
</dbReference>
<dbReference type="PANTHER" id="PTHR40057:SF1">
    <property type="entry name" value="SLR1162 PROTEIN"/>
    <property type="match status" value="1"/>
</dbReference>
<dbReference type="SUPFAM" id="SSF54909">
    <property type="entry name" value="Dimeric alpha+beta barrel"/>
    <property type="match status" value="1"/>
</dbReference>
<protein>
    <recommendedName>
        <fullName>Uncharacterized protein Synpcc7942_2318</fullName>
    </recommendedName>
    <alternativeName>
        <fullName>ORF 2</fullName>
    </alternativeName>
</protein>
<sequence length="208" mass="23031">MNVNTARTSAVIVHPVPPAYADCYLVWQQSITTAAAQFDGYQGTDIYPPENDRDPNWIAVLHFQTPADLQGWLDSPQRAEILAQLPPELAGYSKTVLPQGFAPWFSQLLHKPPSWKMALTVLLALYPTVLLLNLLITPHLQGLGRAGAVLVGNAIGVALMQWGIMPRLTRLLKPWLSADSDRRFSVLGGAAIVSILLLLAHLFQRWFF</sequence>